<feature type="chain" id="PRO_1000193659" description="Gamma-glutamyl phosphate reductase">
    <location>
        <begin position="1"/>
        <end position="420"/>
    </location>
</feature>
<protein>
    <recommendedName>
        <fullName evidence="1">Gamma-glutamyl phosphate reductase</fullName>
        <shortName evidence="1">GPR</shortName>
        <ecNumber evidence="1">1.2.1.41</ecNumber>
    </recommendedName>
    <alternativeName>
        <fullName evidence="1">Glutamate-5-semialdehyde dehydrogenase</fullName>
    </alternativeName>
    <alternativeName>
        <fullName evidence="1">Glutamyl-gamma-semialdehyde dehydrogenase</fullName>
        <shortName evidence="1">GSA dehydrogenase</shortName>
    </alternativeName>
</protein>
<dbReference type="EC" id="1.2.1.41" evidence="1"/>
<dbReference type="EMBL" id="CP000936">
    <property type="protein sequence ID" value="ACA35729.1"/>
    <property type="molecule type" value="Genomic_DNA"/>
</dbReference>
<dbReference type="RefSeq" id="WP_000254677.1">
    <property type="nucleotide sequence ID" value="NC_010380.1"/>
</dbReference>
<dbReference type="SMR" id="B1IBA0"/>
<dbReference type="KEGG" id="spv:SPH_1041"/>
<dbReference type="HOGENOM" id="CLU_030231_0_0_9"/>
<dbReference type="UniPathway" id="UPA00098">
    <property type="reaction ID" value="UER00360"/>
</dbReference>
<dbReference type="Proteomes" id="UP000002163">
    <property type="component" value="Chromosome"/>
</dbReference>
<dbReference type="GO" id="GO:0005737">
    <property type="term" value="C:cytoplasm"/>
    <property type="evidence" value="ECO:0007669"/>
    <property type="project" value="UniProtKB-SubCell"/>
</dbReference>
<dbReference type="GO" id="GO:0004350">
    <property type="term" value="F:glutamate-5-semialdehyde dehydrogenase activity"/>
    <property type="evidence" value="ECO:0007669"/>
    <property type="project" value="UniProtKB-UniRule"/>
</dbReference>
<dbReference type="GO" id="GO:0050661">
    <property type="term" value="F:NADP binding"/>
    <property type="evidence" value="ECO:0007669"/>
    <property type="project" value="InterPro"/>
</dbReference>
<dbReference type="GO" id="GO:0055129">
    <property type="term" value="P:L-proline biosynthetic process"/>
    <property type="evidence" value="ECO:0007669"/>
    <property type="project" value="UniProtKB-UniRule"/>
</dbReference>
<dbReference type="CDD" id="cd07079">
    <property type="entry name" value="ALDH_F18-19_ProA-GPR"/>
    <property type="match status" value="1"/>
</dbReference>
<dbReference type="FunFam" id="3.40.309.10:FF:000006">
    <property type="entry name" value="Gamma-glutamyl phosphate reductase"/>
    <property type="match status" value="1"/>
</dbReference>
<dbReference type="Gene3D" id="3.40.605.10">
    <property type="entry name" value="Aldehyde Dehydrogenase, Chain A, domain 1"/>
    <property type="match status" value="1"/>
</dbReference>
<dbReference type="Gene3D" id="3.40.309.10">
    <property type="entry name" value="Aldehyde Dehydrogenase, Chain A, domain 2"/>
    <property type="match status" value="1"/>
</dbReference>
<dbReference type="HAMAP" id="MF_00412">
    <property type="entry name" value="ProA"/>
    <property type="match status" value="1"/>
</dbReference>
<dbReference type="InterPro" id="IPR016161">
    <property type="entry name" value="Ald_DH/histidinol_DH"/>
</dbReference>
<dbReference type="InterPro" id="IPR016163">
    <property type="entry name" value="Ald_DH_C"/>
</dbReference>
<dbReference type="InterPro" id="IPR016162">
    <property type="entry name" value="Ald_DH_N"/>
</dbReference>
<dbReference type="InterPro" id="IPR015590">
    <property type="entry name" value="Aldehyde_DH_dom"/>
</dbReference>
<dbReference type="InterPro" id="IPR020593">
    <property type="entry name" value="G-glutamylP_reductase_CS"/>
</dbReference>
<dbReference type="InterPro" id="IPR012134">
    <property type="entry name" value="Glu-5-SA_DH"/>
</dbReference>
<dbReference type="InterPro" id="IPR000965">
    <property type="entry name" value="GPR_dom"/>
</dbReference>
<dbReference type="NCBIfam" id="NF001221">
    <property type="entry name" value="PRK00197.1"/>
    <property type="match status" value="1"/>
</dbReference>
<dbReference type="NCBIfam" id="TIGR00407">
    <property type="entry name" value="proA"/>
    <property type="match status" value="1"/>
</dbReference>
<dbReference type="PANTHER" id="PTHR11063:SF8">
    <property type="entry name" value="DELTA-1-PYRROLINE-5-CARBOXYLATE SYNTHASE"/>
    <property type="match status" value="1"/>
</dbReference>
<dbReference type="PANTHER" id="PTHR11063">
    <property type="entry name" value="GLUTAMATE SEMIALDEHYDE DEHYDROGENASE"/>
    <property type="match status" value="1"/>
</dbReference>
<dbReference type="Pfam" id="PF00171">
    <property type="entry name" value="Aldedh"/>
    <property type="match status" value="1"/>
</dbReference>
<dbReference type="PIRSF" id="PIRSF000151">
    <property type="entry name" value="GPR"/>
    <property type="match status" value="1"/>
</dbReference>
<dbReference type="SUPFAM" id="SSF53720">
    <property type="entry name" value="ALDH-like"/>
    <property type="match status" value="1"/>
</dbReference>
<dbReference type="PROSITE" id="PS01223">
    <property type="entry name" value="PROA"/>
    <property type="match status" value="1"/>
</dbReference>
<evidence type="ECO:0000255" key="1">
    <source>
        <dbReference type="HAMAP-Rule" id="MF_00412"/>
    </source>
</evidence>
<name>PROA_STRPI</name>
<keyword id="KW-0028">Amino-acid biosynthesis</keyword>
<keyword id="KW-0963">Cytoplasm</keyword>
<keyword id="KW-0521">NADP</keyword>
<keyword id="KW-0560">Oxidoreductase</keyword>
<keyword id="KW-0641">Proline biosynthesis</keyword>
<sequence>MVSRQEQFEQVQAVKKSINTASEEVKNQALLAMADHLVAATEEILAANALDMAAAKGKISDVMLDRLYLDADRIEAMARGIREVVALPDPIGEVLETSQLENGLVITKKRVAMGVIGIIYESRPNVTSDAAALTLKSGNAVVLRSGKDAYQTTHAIVTALKKGLETTTIHPNVIQLVEDTSHESSYAMMKAKGYLDLLIPRGGAGLINAVVENAIVPVIETGTGIVHVYVDKDADEDKALSIINNAKTSRPSVCNAMEVLLVHEDKAASILPRLDQMLVAERKEAGLEPIQFRLDSKASQFVSGQAAETQDFDTEFLDYVLAVKVVSSLEEAVAHIESHSTHHSDAIVTENAEAAAYFTDQVDSAAVYVNASTRFTDGGQFGLGCEMGISTQKLHARGPMGLKELTSYKYVVTGDGQIRE</sequence>
<gene>
    <name evidence="1" type="primary">proA</name>
    <name type="ordered locus">SPH_1041</name>
</gene>
<reference key="1">
    <citation type="journal article" date="2010" name="Genome Biol.">
        <title>Structure and dynamics of the pan-genome of Streptococcus pneumoniae and closely related species.</title>
        <authorList>
            <person name="Donati C."/>
            <person name="Hiller N.L."/>
            <person name="Tettelin H."/>
            <person name="Muzzi A."/>
            <person name="Croucher N.J."/>
            <person name="Angiuoli S.V."/>
            <person name="Oggioni M."/>
            <person name="Dunning Hotopp J.C."/>
            <person name="Hu F.Z."/>
            <person name="Riley D.R."/>
            <person name="Covacci A."/>
            <person name="Mitchell T.J."/>
            <person name="Bentley S.D."/>
            <person name="Kilian M."/>
            <person name="Ehrlich G.D."/>
            <person name="Rappuoli R."/>
            <person name="Moxon E.R."/>
            <person name="Masignani V."/>
        </authorList>
    </citation>
    <scope>NUCLEOTIDE SEQUENCE [LARGE SCALE GENOMIC DNA]</scope>
    <source>
        <strain>Hungary19A-6</strain>
    </source>
</reference>
<accession>B1IBA0</accession>
<proteinExistence type="inferred from homology"/>
<organism>
    <name type="scientific">Streptococcus pneumoniae (strain Hungary19A-6)</name>
    <dbReference type="NCBI Taxonomy" id="487214"/>
    <lineage>
        <taxon>Bacteria</taxon>
        <taxon>Bacillati</taxon>
        <taxon>Bacillota</taxon>
        <taxon>Bacilli</taxon>
        <taxon>Lactobacillales</taxon>
        <taxon>Streptococcaceae</taxon>
        <taxon>Streptococcus</taxon>
    </lineage>
</organism>
<comment type="function">
    <text evidence="1">Catalyzes the NADPH-dependent reduction of L-glutamate 5-phosphate into L-glutamate 5-semialdehyde and phosphate. The product spontaneously undergoes cyclization to form 1-pyrroline-5-carboxylate.</text>
</comment>
<comment type="catalytic activity">
    <reaction evidence="1">
        <text>L-glutamate 5-semialdehyde + phosphate + NADP(+) = L-glutamyl 5-phosphate + NADPH + H(+)</text>
        <dbReference type="Rhea" id="RHEA:19541"/>
        <dbReference type="ChEBI" id="CHEBI:15378"/>
        <dbReference type="ChEBI" id="CHEBI:43474"/>
        <dbReference type="ChEBI" id="CHEBI:57783"/>
        <dbReference type="ChEBI" id="CHEBI:58066"/>
        <dbReference type="ChEBI" id="CHEBI:58274"/>
        <dbReference type="ChEBI" id="CHEBI:58349"/>
        <dbReference type="EC" id="1.2.1.41"/>
    </reaction>
</comment>
<comment type="pathway">
    <text evidence="1">Amino-acid biosynthesis; L-proline biosynthesis; L-glutamate 5-semialdehyde from L-glutamate: step 2/2.</text>
</comment>
<comment type="subcellular location">
    <subcellularLocation>
        <location evidence="1">Cytoplasm</location>
    </subcellularLocation>
</comment>
<comment type="similarity">
    <text evidence="1">Belongs to the gamma-glutamyl phosphate reductase family.</text>
</comment>